<sequence>MDFRIGQGYDVHQLVPGRPLIIGGVTIPYERGLLGHSDADVLLHAITDALFGAAALGDIGRHFSDTDPRFKGADSRALLRECASRVAQAGFAIRNVDSTIIAQAPKLAPHIDAMRANIAADLDLPLDRVNVKAKTNEKLGYLGRGEGIEAQAAALVVREAAA</sequence>
<proteinExistence type="inferred from homology"/>
<keyword id="KW-0414">Isoprene biosynthesis</keyword>
<keyword id="KW-0456">Lyase</keyword>
<keyword id="KW-0479">Metal-binding</keyword>
<comment type="function">
    <text evidence="1">Involved in the biosynthesis of isopentenyl diphosphate (IPP) and dimethylallyl diphosphate (DMAPP), two major building blocks of isoprenoid compounds. Catalyzes the conversion of 4-diphosphocytidyl-2-C-methyl-D-erythritol 2-phosphate (CDP-ME2P) to 2-C-methyl-D-erythritol 2,4-cyclodiphosphate (ME-CPP) with a corresponding release of cytidine 5-monophosphate (CMP).</text>
</comment>
<comment type="catalytic activity">
    <reaction evidence="1">
        <text>4-CDP-2-C-methyl-D-erythritol 2-phosphate = 2-C-methyl-D-erythritol 2,4-cyclic diphosphate + CMP</text>
        <dbReference type="Rhea" id="RHEA:23864"/>
        <dbReference type="ChEBI" id="CHEBI:57919"/>
        <dbReference type="ChEBI" id="CHEBI:58483"/>
        <dbReference type="ChEBI" id="CHEBI:60377"/>
        <dbReference type="EC" id="4.6.1.12"/>
    </reaction>
</comment>
<comment type="cofactor">
    <cofactor evidence="1">
        <name>a divalent metal cation</name>
        <dbReference type="ChEBI" id="CHEBI:60240"/>
    </cofactor>
    <text evidence="1">Binds 1 divalent metal cation per subunit.</text>
</comment>
<comment type="pathway">
    <text evidence="1">Isoprenoid biosynthesis; isopentenyl diphosphate biosynthesis via DXP pathway; isopentenyl diphosphate from 1-deoxy-D-xylulose 5-phosphate: step 4/6.</text>
</comment>
<comment type="subunit">
    <text evidence="1">Homotrimer.</text>
</comment>
<comment type="similarity">
    <text evidence="1">Belongs to the IspF family.</text>
</comment>
<accession>A2SBD7</accession>
<reference key="1">
    <citation type="journal article" date="2010" name="Genome Biol. Evol.">
        <title>Continuing evolution of Burkholderia mallei through genome reduction and large-scale rearrangements.</title>
        <authorList>
            <person name="Losada L."/>
            <person name="Ronning C.M."/>
            <person name="DeShazer D."/>
            <person name="Woods D."/>
            <person name="Fedorova N."/>
            <person name="Kim H.S."/>
            <person name="Shabalina S.A."/>
            <person name="Pearson T.R."/>
            <person name="Brinkac L."/>
            <person name="Tan P."/>
            <person name="Nandi T."/>
            <person name="Crabtree J."/>
            <person name="Badger J."/>
            <person name="Beckstrom-Sternberg S."/>
            <person name="Saqib M."/>
            <person name="Schutzer S.E."/>
            <person name="Keim P."/>
            <person name="Nierman W.C."/>
        </authorList>
    </citation>
    <scope>NUCLEOTIDE SEQUENCE [LARGE SCALE GENOMIC DNA]</scope>
    <source>
        <strain>NCTC 10229</strain>
    </source>
</reference>
<gene>
    <name evidence="1" type="primary">ispF</name>
    <name type="ordered locus">BMA10229_A3320</name>
</gene>
<name>ISPF_BURM9</name>
<protein>
    <recommendedName>
        <fullName evidence="1">2-C-methyl-D-erythritol 2,4-cyclodiphosphate synthase</fullName>
        <shortName evidence="1">MECDP-synthase</shortName>
        <shortName evidence="1">MECPP-synthase</shortName>
        <shortName evidence="1">MECPS</shortName>
        <ecNumber evidence="1">4.6.1.12</ecNumber>
    </recommendedName>
</protein>
<feature type="chain" id="PRO_1000022813" description="2-C-methyl-D-erythritol 2,4-cyclodiphosphate synthase">
    <location>
        <begin position="1"/>
        <end position="162"/>
    </location>
</feature>
<feature type="binding site" evidence="1">
    <location>
        <begin position="10"/>
        <end position="12"/>
    </location>
    <ligand>
        <name>4-CDP-2-C-methyl-D-erythritol 2-phosphate</name>
        <dbReference type="ChEBI" id="CHEBI:57919"/>
    </ligand>
</feature>
<feature type="binding site" evidence="1">
    <location>
        <position position="10"/>
    </location>
    <ligand>
        <name>a divalent metal cation</name>
        <dbReference type="ChEBI" id="CHEBI:60240"/>
    </ligand>
</feature>
<feature type="binding site" evidence="1">
    <location>
        <position position="12"/>
    </location>
    <ligand>
        <name>a divalent metal cation</name>
        <dbReference type="ChEBI" id="CHEBI:60240"/>
    </ligand>
</feature>
<feature type="binding site" evidence="1">
    <location>
        <begin position="36"/>
        <end position="37"/>
    </location>
    <ligand>
        <name>4-CDP-2-C-methyl-D-erythritol 2-phosphate</name>
        <dbReference type="ChEBI" id="CHEBI:57919"/>
    </ligand>
</feature>
<feature type="binding site" evidence="1">
    <location>
        <position position="44"/>
    </location>
    <ligand>
        <name>a divalent metal cation</name>
        <dbReference type="ChEBI" id="CHEBI:60240"/>
    </ligand>
</feature>
<feature type="binding site" evidence="1">
    <location>
        <begin position="58"/>
        <end position="60"/>
    </location>
    <ligand>
        <name>4-CDP-2-C-methyl-D-erythritol 2-phosphate</name>
        <dbReference type="ChEBI" id="CHEBI:57919"/>
    </ligand>
</feature>
<feature type="binding site" evidence="1">
    <location>
        <begin position="63"/>
        <end position="67"/>
    </location>
    <ligand>
        <name>4-CDP-2-C-methyl-D-erythritol 2-phosphate</name>
        <dbReference type="ChEBI" id="CHEBI:57919"/>
    </ligand>
</feature>
<feature type="binding site" evidence="1">
    <location>
        <position position="144"/>
    </location>
    <ligand>
        <name>4-CDP-2-C-methyl-D-erythritol 2-phosphate</name>
        <dbReference type="ChEBI" id="CHEBI:57919"/>
    </ligand>
</feature>
<feature type="site" description="Transition state stabilizer" evidence="1">
    <location>
        <position position="36"/>
    </location>
</feature>
<feature type="site" description="Transition state stabilizer" evidence="1">
    <location>
        <position position="135"/>
    </location>
</feature>
<dbReference type="EC" id="4.6.1.12" evidence="1"/>
<dbReference type="EMBL" id="CP000546">
    <property type="protein sequence ID" value="ABN02085.1"/>
    <property type="molecule type" value="Genomic_DNA"/>
</dbReference>
<dbReference type="RefSeq" id="WP_004191369.1">
    <property type="nucleotide sequence ID" value="NC_008836.1"/>
</dbReference>
<dbReference type="SMR" id="A2SBD7"/>
<dbReference type="GeneID" id="93060627"/>
<dbReference type="KEGG" id="bml:BMA10229_A3320"/>
<dbReference type="HOGENOM" id="CLU_084630_2_0_4"/>
<dbReference type="UniPathway" id="UPA00056">
    <property type="reaction ID" value="UER00095"/>
</dbReference>
<dbReference type="Proteomes" id="UP000002283">
    <property type="component" value="Chromosome I"/>
</dbReference>
<dbReference type="GO" id="GO:0008685">
    <property type="term" value="F:2-C-methyl-D-erythritol 2,4-cyclodiphosphate synthase activity"/>
    <property type="evidence" value="ECO:0007669"/>
    <property type="project" value="UniProtKB-UniRule"/>
</dbReference>
<dbReference type="GO" id="GO:0046872">
    <property type="term" value="F:metal ion binding"/>
    <property type="evidence" value="ECO:0007669"/>
    <property type="project" value="UniProtKB-KW"/>
</dbReference>
<dbReference type="GO" id="GO:0019288">
    <property type="term" value="P:isopentenyl diphosphate biosynthetic process, methylerythritol 4-phosphate pathway"/>
    <property type="evidence" value="ECO:0007669"/>
    <property type="project" value="UniProtKB-UniRule"/>
</dbReference>
<dbReference type="GO" id="GO:0016114">
    <property type="term" value="P:terpenoid biosynthetic process"/>
    <property type="evidence" value="ECO:0007669"/>
    <property type="project" value="InterPro"/>
</dbReference>
<dbReference type="CDD" id="cd00554">
    <property type="entry name" value="MECDP_synthase"/>
    <property type="match status" value="1"/>
</dbReference>
<dbReference type="FunFam" id="3.30.1330.50:FF:000001">
    <property type="entry name" value="2-C-methyl-D-erythritol 2,4-cyclodiphosphate synthase"/>
    <property type="match status" value="1"/>
</dbReference>
<dbReference type="Gene3D" id="3.30.1330.50">
    <property type="entry name" value="2-C-methyl-D-erythritol 2,4-cyclodiphosphate synthase"/>
    <property type="match status" value="1"/>
</dbReference>
<dbReference type="HAMAP" id="MF_00107">
    <property type="entry name" value="IspF"/>
    <property type="match status" value="1"/>
</dbReference>
<dbReference type="InterPro" id="IPR003526">
    <property type="entry name" value="MECDP_synthase"/>
</dbReference>
<dbReference type="InterPro" id="IPR020555">
    <property type="entry name" value="MECDP_synthase_CS"/>
</dbReference>
<dbReference type="InterPro" id="IPR036571">
    <property type="entry name" value="MECDP_synthase_sf"/>
</dbReference>
<dbReference type="NCBIfam" id="TIGR00151">
    <property type="entry name" value="ispF"/>
    <property type="match status" value="1"/>
</dbReference>
<dbReference type="PANTHER" id="PTHR43181">
    <property type="entry name" value="2-C-METHYL-D-ERYTHRITOL 2,4-CYCLODIPHOSPHATE SYNTHASE, CHLOROPLASTIC"/>
    <property type="match status" value="1"/>
</dbReference>
<dbReference type="PANTHER" id="PTHR43181:SF1">
    <property type="entry name" value="2-C-METHYL-D-ERYTHRITOL 2,4-CYCLODIPHOSPHATE SYNTHASE, CHLOROPLASTIC"/>
    <property type="match status" value="1"/>
</dbReference>
<dbReference type="Pfam" id="PF02542">
    <property type="entry name" value="YgbB"/>
    <property type="match status" value="1"/>
</dbReference>
<dbReference type="SUPFAM" id="SSF69765">
    <property type="entry name" value="IpsF-like"/>
    <property type="match status" value="1"/>
</dbReference>
<dbReference type="PROSITE" id="PS01350">
    <property type="entry name" value="ISPF"/>
    <property type="match status" value="1"/>
</dbReference>
<evidence type="ECO:0000255" key="1">
    <source>
        <dbReference type="HAMAP-Rule" id="MF_00107"/>
    </source>
</evidence>
<organism>
    <name type="scientific">Burkholderia mallei (strain NCTC 10229)</name>
    <dbReference type="NCBI Taxonomy" id="412022"/>
    <lineage>
        <taxon>Bacteria</taxon>
        <taxon>Pseudomonadati</taxon>
        <taxon>Pseudomonadota</taxon>
        <taxon>Betaproteobacteria</taxon>
        <taxon>Burkholderiales</taxon>
        <taxon>Burkholderiaceae</taxon>
        <taxon>Burkholderia</taxon>
        <taxon>pseudomallei group</taxon>
    </lineage>
</organism>